<protein>
    <recommendedName>
        <fullName evidence="6 7">Nucleolar complex-associated protein 3</fullName>
        <shortName evidence="6">AtNOC3</shortName>
    </recommendedName>
</protein>
<keyword id="KW-0025">Alternative splicing</keyword>
<keyword id="KW-0175">Coiled coil</keyword>
<keyword id="KW-0235">DNA replication</keyword>
<keyword id="KW-0539">Nucleus</keyword>
<keyword id="KW-1185">Reference proteome</keyword>
<keyword id="KW-0690">Ribosome biogenesis</keyword>
<gene>
    <name evidence="6 7" type="primary">NOC3</name>
    <name evidence="9" type="ordered locus">At1g79150</name>
    <name evidence="10" type="ORF">YUP8H12R.24</name>
</gene>
<evidence type="ECO:0000250" key="1">
    <source>
        <dbReference type="UniProtKB" id="Q07896"/>
    </source>
</evidence>
<evidence type="ECO:0000255" key="2"/>
<evidence type="ECO:0000255" key="3">
    <source>
        <dbReference type="PROSITE-ProRule" id="PRU00768"/>
    </source>
</evidence>
<evidence type="ECO:0000256" key="4">
    <source>
        <dbReference type="SAM" id="MobiDB-lite"/>
    </source>
</evidence>
<evidence type="ECO:0000269" key="5">
    <source>
    </source>
</evidence>
<evidence type="ECO:0000303" key="6">
    <source>
    </source>
</evidence>
<evidence type="ECO:0000303" key="7">
    <source>
    </source>
</evidence>
<evidence type="ECO:0000305" key="8"/>
<evidence type="ECO:0000312" key="9">
    <source>
        <dbReference type="Araport" id="AT1G79150"/>
    </source>
</evidence>
<evidence type="ECO:0000312" key="10">
    <source>
        <dbReference type="EMBL" id="AAC17047.1"/>
    </source>
</evidence>
<name>NOC3_ARATH</name>
<dbReference type="EMBL" id="AC002986">
    <property type="protein sequence ID" value="AAC17047.1"/>
    <property type="status" value="ALT_SEQ"/>
    <property type="molecule type" value="Genomic_DNA"/>
</dbReference>
<dbReference type="EMBL" id="CP002684">
    <property type="protein sequence ID" value="AEE36209.1"/>
    <property type="molecule type" value="Genomic_DNA"/>
</dbReference>
<dbReference type="EMBL" id="DQ459177">
    <property type="protein sequence ID" value="ABE97175.1"/>
    <property type="molecule type" value="mRNA"/>
</dbReference>
<dbReference type="EMBL" id="DQ652941">
    <property type="protein sequence ID" value="ABK28474.1"/>
    <property type="status" value="ALT_SEQ"/>
    <property type="molecule type" value="mRNA"/>
</dbReference>
<dbReference type="EMBL" id="AK226761">
    <property type="status" value="NOT_ANNOTATED_CDS"/>
    <property type="molecule type" value="mRNA"/>
</dbReference>
<dbReference type="EMBL" id="BT011720">
    <property type="protein sequence ID" value="AAS49083.1"/>
    <property type="molecule type" value="mRNA"/>
</dbReference>
<dbReference type="PIR" id="T01041">
    <property type="entry name" value="T01041"/>
</dbReference>
<dbReference type="RefSeq" id="NP_178036.2">
    <molecule id="F4IDJ0-1"/>
    <property type="nucleotide sequence ID" value="NM_106566.4"/>
</dbReference>
<dbReference type="SMR" id="F4IDJ0"/>
<dbReference type="FunCoup" id="F4IDJ0">
    <property type="interactions" value="3686"/>
</dbReference>
<dbReference type="STRING" id="3702.F4IDJ0"/>
<dbReference type="iPTMnet" id="F4IDJ0"/>
<dbReference type="PaxDb" id="3702-AT1G79150.1"/>
<dbReference type="ProteomicsDB" id="204324"/>
<dbReference type="EnsemblPlants" id="AT1G79150.1">
    <molecule id="F4IDJ0-1"/>
    <property type="protein sequence ID" value="AT1G79150.1"/>
    <property type="gene ID" value="AT1G79150"/>
</dbReference>
<dbReference type="GeneID" id="844256"/>
<dbReference type="Gramene" id="AT1G79150.1">
    <molecule id="F4IDJ0-1"/>
    <property type="protein sequence ID" value="AT1G79150.1"/>
    <property type="gene ID" value="AT1G79150"/>
</dbReference>
<dbReference type="KEGG" id="ath:AT1G79150"/>
<dbReference type="Araport" id="AT1G79150"/>
<dbReference type="TAIR" id="AT1G79150">
    <property type="gene designation" value="NOC3"/>
</dbReference>
<dbReference type="eggNOG" id="KOG2153">
    <property type="taxonomic scope" value="Eukaryota"/>
</dbReference>
<dbReference type="HOGENOM" id="CLU_012441_4_0_1"/>
<dbReference type="InParanoid" id="F4IDJ0"/>
<dbReference type="OMA" id="HYCPQVR"/>
<dbReference type="CD-CODE" id="4299E36E">
    <property type="entry name" value="Nucleolus"/>
</dbReference>
<dbReference type="PRO" id="PR:F4IDJ0"/>
<dbReference type="Proteomes" id="UP000006548">
    <property type="component" value="Chromosome 1"/>
</dbReference>
<dbReference type="ExpressionAtlas" id="F4IDJ0">
    <property type="expression patterns" value="baseline and differential"/>
</dbReference>
<dbReference type="GO" id="GO:0005730">
    <property type="term" value="C:nucleolus"/>
    <property type="evidence" value="ECO:0000314"/>
    <property type="project" value="UniProtKB"/>
</dbReference>
<dbReference type="GO" id="GO:0005654">
    <property type="term" value="C:nucleoplasm"/>
    <property type="evidence" value="ECO:0000314"/>
    <property type="project" value="UniProtKB"/>
</dbReference>
<dbReference type="GO" id="GO:0006260">
    <property type="term" value="P:DNA replication"/>
    <property type="evidence" value="ECO:0007669"/>
    <property type="project" value="UniProtKB-KW"/>
</dbReference>
<dbReference type="GO" id="GO:0042254">
    <property type="term" value="P:ribosome biogenesis"/>
    <property type="evidence" value="ECO:0007669"/>
    <property type="project" value="UniProtKB-KW"/>
</dbReference>
<dbReference type="InterPro" id="IPR016024">
    <property type="entry name" value="ARM-type_fold"/>
</dbReference>
<dbReference type="InterPro" id="IPR005612">
    <property type="entry name" value="CCAAT-binding_factor"/>
</dbReference>
<dbReference type="InterPro" id="IPR011501">
    <property type="entry name" value="Noc3_N"/>
</dbReference>
<dbReference type="InterPro" id="IPR016903">
    <property type="entry name" value="Nucleolar_cplx-assoc_3"/>
</dbReference>
<dbReference type="PANTHER" id="PTHR14428">
    <property type="entry name" value="NUCLEOLAR COMPLEX PROTEIN 3"/>
    <property type="match status" value="1"/>
</dbReference>
<dbReference type="PANTHER" id="PTHR14428:SF5">
    <property type="entry name" value="NUCLEOLAR COMPLEX PROTEIN 3 HOMOLOG"/>
    <property type="match status" value="1"/>
</dbReference>
<dbReference type="Pfam" id="PF03914">
    <property type="entry name" value="CBF"/>
    <property type="match status" value="1"/>
</dbReference>
<dbReference type="Pfam" id="PF07540">
    <property type="entry name" value="NOC3p"/>
    <property type="match status" value="1"/>
</dbReference>
<dbReference type="SUPFAM" id="SSF48371">
    <property type="entry name" value="ARM repeat"/>
    <property type="match status" value="1"/>
</dbReference>
<sequence length="830" mass="94890">MGKNRRKQKVIPPPLLPPDVAEEDIEFSDEDLKYVKENTDYAQFVSQIDTAAINKQCGGRVMTVEDKYEEERSKRKTLQEEKGNGEILVDPVDVLPVKTLDGKLHYRTESKKSKLAEAETDEAEKDVLEDEHVLNKSQRREKAKKSKREAKKHEKDLPDEILQEEEETPQAAVLAEVKEELSAEESFENKKNKIAELGMLLLSDPEANIKTLKDMLDICKDQNTKIVKLALLSLLAVFKDIIPGYRIRLPTEKELEMKISKEVKKTRFYESTLLKAYKSYLQKLIIFEKQSVYNQIANRCLCTLLEAVPHFNYRDNLLIAVVRNISSPDEVVRRLCCSTIRYLFSNEGKHGGELTVQAVRLIADHVKAHNCQLHPNAIEVFMSIRFDEDIGKPNKEDEHNKKYKKNNKRKTQEEQNQVQENERKKSKKDMMSKIRDEVSADHRGVTYEPDAKERRKMQTETLSAVFETYFRILRNTMYTIGERTEEIPTSNPGAFGSHPLLAPCLDGLAKFTQQLDLDYMGDLMNYLKKLASSSSSVSNNTKQKNSKLLTVSERLRCCLVAFKVMRSNLNALNVDLQDFFVQLYNLILEYRPGRDSGVILAESLKIMLCDDRHQDMQKAAAFVKRLATFALCFGCAESMSALVTLKTLLQKNVKCRNLLENDAGGGSVSGSIAKYQPYATDPNLSGALATVLWELSLLSKHYHPAISTMATTVSNMNTSQSQTFLSAVTPQQAFADFSLVKESFEPKNESRKLNNKRKRESLPEEAKNVPEIDMVKLSKKLKENFTILRDIKEDERVRMELLQSEEKKPLKKQNNVVKKKLKNPKSKKQI</sequence>
<accession>F4IDJ0</accession>
<accession>A0MEH1</accession>
<accession>O64537</accession>
<accession>Q1KS85</accession>
<accession>Q6NME0</accession>
<feature type="chain" id="PRO_0000454496" description="Nucleolar complex-associated protein 3">
    <location>
        <begin position="1"/>
        <end position="830"/>
    </location>
</feature>
<feature type="region of interest" description="Disordered" evidence="4">
    <location>
        <begin position="1"/>
        <end position="22"/>
    </location>
</feature>
<feature type="region of interest" description="Disordered" evidence="4">
    <location>
        <begin position="67"/>
        <end position="86"/>
    </location>
</feature>
<feature type="region of interest" description="Disordered" evidence="4">
    <location>
        <begin position="112"/>
        <end position="169"/>
    </location>
</feature>
<feature type="region of interest" description="Disordered" evidence="4">
    <location>
        <begin position="391"/>
        <end position="436"/>
    </location>
</feature>
<feature type="region of interest" description="Disordered" evidence="4">
    <location>
        <begin position="802"/>
        <end position="830"/>
    </location>
</feature>
<feature type="coiled-coil region" evidence="2">
    <location>
        <begin position="61"/>
        <end position="81"/>
    </location>
</feature>
<feature type="coiled-coil region" evidence="2">
    <location>
        <begin position="111"/>
        <end position="156"/>
    </location>
</feature>
<feature type="coiled-coil region" evidence="2">
    <location>
        <begin position="400"/>
        <end position="429"/>
    </location>
</feature>
<feature type="short sequence motif" description="Nuclear localization signal 1" evidence="3">
    <location>
        <begin position="138"/>
        <end position="145"/>
    </location>
</feature>
<feature type="short sequence motif" description="Nuclear localization signal 2" evidence="3">
    <location>
        <begin position="408"/>
        <end position="415"/>
    </location>
</feature>
<feature type="short sequence motif" description="Nuclear localization signal 3" evidence="3">
    <location>
        <begin position="806"/>
        <end position="813"/>
    </location>
</feature>
<feature type="compositionally biased region" description="Basic and acidic residues" evidence="4">
    <location>
        <begin position="67"/>
        <end position="84"/>
    </location>
</feature>
<feature type="compositionally biased region" description="Acidic residues" evidence="4">
    <location>
        <begin position="118"/>
        <end position="129"/>
    </location>
</feature>
<feature type="compositionally biased region" description="Basic and acidic residues" evidence="4">
    <location>
        <begin position="130"/>
        <end position="140"/>
    </location>
</feature>
<feature type="compositionally biased region" description="Basic residues" evidence="4">
    <location>
        <begin position="141"/>
        <end position="150"/>
    </location>
</feature>
<feature type="compositionally biased region" description="Acidic residues" evidence="4">
    <location>
        <begin position="159"/>
        <end position="168"/>
    </location>
</feature>
<feature type="compositionally biased region" description="Basic and acidic residues" evidence="4">
    <location>
        <begin position="391"/>
        <end position="400"/>
    </location>
</feature>
<feature type="compositionally biased region" description="Basic and acidic residues" evidence="4">
    <location>
        <begin position="420"/>
        <end position="436"/>
    </location>
</feature>
<feature type="compositionally biased region" description="Basic residues" evidence="4">
    <location>
        <begin position="817"/>
        <end position="830"/>
    </location>
</feature>
<feature type="splice variant" id="VSP_061347" description="In isoform 2.">
    <original>TEEIPTSNPGAF</original>
    <variation>YLYIHFCNHFSK</variation>
    <location>
        <begin position="484"/>
        <end position="495"/>
    </location>
</feature>
<feature type="splice variant" id="VSP_061348" description="In isoform 2.">
    <location>
        <begin position="496"/>
        <end position="830"/>
    </location>
</feature>
<reference key="1">
    <citation type="journal article" date="2000" name="Nature">
        <title>Sequence and analysis of chromosome 1 of the plant Arabidopsis thaliana.</title>
        <authorList>
            <person name="Theologis A."/>
            <person name="Ecker J.R."/>
            <person name="Palm C.J."/>
            <person name="Federspiel N.A."/>
            <person name="Kaul S."/>
            <person name="White O."/>
            <person name="Alonso J."/>
            <person name="Altafi H."/>
            <person name="Araujo R."/>
            <person name="Bowman C.L."/>
            <person name="Brooks S.Y."/>
            <person name="Buehler E."/>
            <person name="Chan A."/>
            <person name="Chao Q."/>
            <person name="Chen H."/>
            <person name="Cheuk R.F."/>
            <person name="Chin C.W."/>
            <person name="Chung M.K."/>
            <person name="Conn L."/>
            <person name="Conway A.B."/>
            <person name="Conway A.R."/>
            <person name="Creasy T.H."/>
            <person name="Dewar K."/>
            <person name="Dunn P."/>
            <person name="Etgu P."/>
            <person name="Feldblyum T.V."/>
            <person name="Feng J.-D."/>
            <person name="Fong B."/>
            <person name="Fujii C.Y."/>
            <person name="Gill J.E."/>
            <person name="Goldsmith A.D."/>
            <person name="Haas B."/>
            <person name="Hansen N.F."/>
            <person name="Hughes B."/>
            <person name="Huizar L."/>
            <person name="Hunter J.L."/>
            <person name="Jenkins J."/>
            <person name="Johnson-Hopson C."/>
            <person name="Khan S."/>
            <person name="Khaykin E."/>
            <person name="Kim C.J."/>
            <person name="Koo H.L."/>
            <person name="Kremenetskaia I."/>
            <person name="Kurtz D.B."/>
            <person name="Kwan A."/>
            <person name="Lam B."/>
            <person name="Langin-Hooper S."/>
            <person name="Lee A."/>
            <person name="Lee J.M."/>
            <person name="Lenz C.A."/>
            <person name="Li J.H."/>
            <person name="Li Y.-P."/>
            <person name="Lin X."/>
            <person name="Liu S.X."/>
            <person name="Liu Z.A."/>
            <person name="Luros J.S."/>
            <person name="Maiti R."/>
            <person name="Marziali A."/>
            <person name="Militscher J."/>
            <person name="Miranda M."/>
            <person name="Nguyen M."/>
            <person name="Nierman W.C."/>
            <person name="Osborne B.I."/>
            <person name="Pai G."/>
            <person name="Peterson J."/>
            <person name="Pham P.K."/>
            <person name="Rizzo M."/>
            <person name="Rooney T."/>
            <person name="Rowley D."/>
            <person name="Sakano H."/>
            <person name="Salzberg S.L."/>
            <person name="Schwartz J.R."/>
            <person name="Shinn P."/>
            <person name="Southwick A.M."/>
            <person name="Sun H."/>
            <person name="Tallon L.J."/>
            <person name="Tambunga G."/>
            <person name="Toriumi M.J."/>
            <person name="Town C.D."/>
            <person name="Utterback T."/>
            <person name="Van Aken S."/>
            <person name="Vaysberg M."/>
            <person name="Vysotskaia V.S."/>
            <person name="Walker M."/>
            <person name="Wu D."/>
            <person name="Yu G."/>
            <person name="Fraser C.M."/>
            <person name="Venter J.C."/>
            <person name="Davis R.W."/>
        </authorList>
    </citation>
    <scope>NUCLEOTIDE SEQUENCE [LARGE SCALE GENOMIC DNA]</scope>
    <source>
        <strain>cv. Columbia</strain>
    </source>
</reference>
<reference key="2">
    <citation type="journal article" date="2017" name="Plant J.">
        <title>Araport11: a complete reannotation of the Arabidopsis thaliana reference genome.</title>
        <authorList>
            <person name="Cheng C.Y."/>
            <person name="Krishnakumar V."/>
            <person name="Chan A.P."/>
            <person name="Thibaud-Nissen F."/>
            <person name="Schobel S."/>
            <person name="Town C.D."/>
        </authorList>
    </citation>
    <scope>GENOME REANNOTATION</scope>
    <source>
        <strain>cv. Columbia</strain>
    </source>
</reference>
<reference key="3">
    <citation type="journal article" date="2006" name="Plant Biotechnol. J.">
        <title>Simultaneous high-throughput recombinational cloning of open reading frames in closed and open configurations.</title>
        <authorList>
            <person name="Underwood B.A."/>
            <person name="Vanderhaeghen R."/>
            <person name="Whitford R."/>
            <person name="Town C.D."/>
            <person name="Hilson P."/>
        </authorList>
    </citation>
    <scope>NUCLEOTIDE SEQUENCE [LARGE SCALE MRNA] (ISOFORM 2)</scope>
    <source>
        <strain>cv. Columbia</strain>
    </source>
</reference>
<reference key="4">
    <citation type="submission" date="2006-07" db="EMBL/GenBank/DDBJ databases">
        <title>Large-scale analysis of RIKEN Arabidopsis full-length (RAFL) cDNAs.</title>
        <authorList>
            <person name="Totoki Y."/>
            <person name="Seki M."/>
            <person name="Ishida J."/>
            <person name="Nakajima M."/>
            <person name="Enju A."/>
            <person name="Kamiya A."/>
            <person name="Narusaka M."/>
            <person name="Shin-i T."/>
            <person name="Nakagawa M."/>
            <person name="Sakamoto N."/>
            <person name="Oishi K."/>
            <person name="Kohara Y."/>
            <person name="Kobayashi M."/>
            <person name="Toyoda A."/>
            <person name="Sakaki Y."/>
            <person name="Sakurai T."/>
            <person name="Iida K."/>
            <person name="Akiyama K."/>
            <person name="Satou M."/>
            <person name="Toyoda T."/>
            <person name="Konagaya A."/>
            <person name="Carninci P."/>
            <person name="Kawai J."/>
            <person name="Hayashizaki Y."/>
            <person name="Shinozaki K."/>
        </authorList>
    </citation>
    <scope>NUCLEOTIDE SEQUENCE [LARGE SCALE MRNA] (ISOFORM 1)</scope>
    <source>
        <strain>cv. Columbia</strain>
    </source>
</reference>
<reference key="5">
    <citation type="submission" date="2004-03" db="EMBL/GenBank/DDBJ databases">
        <title>Arabidopsis ORF clones.</title>
        <authorList>
            <person name="Cheuk R.F."/>
            <person name="Chen H."/>
            <person name="Kim C.J."/>
            <person name="Shinn P."/>
            <person name="Carninci P."/>
            <person name="Hayashizaki Y."/>
            <person name="Ishida J."/>
            <person name="Kamiya A."/>
            <person name="Kawai J."/>
            <person name="Narusaka M."/>
            <person name="Sakurai T."/>
            <person name="Satou M."/>
            <person name="Seki M."/>
            <person name="Shinozaki K."/>
            <person name="Ecker J.R."/>
        </authorList>
    </citation>
    <scope>NUCLEOTIDE SEQUENCE [LARGE SCALE MRNA] OF 520-830 (ISOFORM 1/2)</scope>
    <source>
        <strain>cv. Columbia</strain>
    </source>
</reference>
<reference key="6">
    <citation type="journal article" date="2007" name="Plant Physiol.">
        <title>Genome-wide analysis of the core DNA replication machinery in the higher plants Arabidopsis and rice.</title>
        <authorList>
            <person name="Shultz R.W."/>
            <person name="Tatineni V.M."/>
            <person name="Hanley-Bowdoin L."/>
            <person name="Thompson W.F."/>
        </authorList>
    </citation>
    <scope>REVIEW ON THE CORE DNA REPLICATION MACHINERY</scope>
    <scope>GENE FAMILY</scope>
    <scope>NOMENCLATURE</scope>
</reference>
<reference key="7">
    <citation type="journal article" date="2018" name="FEBS Open Bio">
        <title>REBELOTE, a regulator of floral determinacy in Arabidopsis thaliana, interacts with both nucleolar and nucleoplasmic proteins.</title>
        <authorList>
            <person name="de Bossoreille S."/>
            <person name="Morel P."/>
            <person name="Trehin C."/>
            <person name="Negrutiu I."/>
        </authorList>
    </citation>
    <scope>INTERACTION WITH RBL AND NOC2</scope>
    <scope>SUBCELLULAR LOCATION</scope>
</reference>
<comment type="function">
    <text evidence="1 6">May be required for synthesis of 60S ribosomal subunits and the transport of pre-ribosomes from the nucleoplasm to the cytoplasm (By similarity). Also required for initiation of DNA replication (PubMed:17556508).</text>
</comment>
<comment type="subunit">
    <text evidence="5">Component of nucleolar complexes (PubMed:30338215). Interacts with RBL and NOC2 in both the nucleolus and nucleoplasm (PubMed:30338215).</text>
</comment>
<comment type="subcellular location">
    <subcellularLocation>
        <location evidence="3">Nucleus</location>
    </subcellularLocation>
    <subcellularLocation>
        <location evidence="5">Nucleus</location>
        <location evidence="5">Nucleolus</location>
    </subcellularLocation>
    <subcellularLocation>
        <location evidence="5">Nucleus</location>
        <location evidence="5">Nucleoplasm</location>
    </subcellularLocation>
    <text evidence="5">Also observed in nucleoplasmic bodies.</text>
</comment>
<comment type="alternative products">
    <event type="alternative splicing"/>
    <isoform>
        <id>F4IDJ0-1</id>
        <name>1</name>
        <sequence type="displayed"/>
    </isoform>
    <isoform>
        <id>F4IDJ0-2</id>
        <name>2</name>
        <sequence type="described" ref="VSP_061347 VSP_061348"/>
    </isoform>
</comment>
<comment type="similarity">
    <text evidence="8">Belongs to the CBF/MAK21 family.</text>
</comment>
<comment type="sequence caution" evidence="8">
    <conflict type="erroneous gene model prediction">
        <sequence resource="EMBL-CDS" id="AAC17047"/>
    </conflict>
</comment>
<comment type="sequence caution" evidence="8">
    <conflict type="erroneous termination">
        <sequence resource="EMBL-CDS" id="ABK28474"/>
    </conflict>
    <text>Extended C-terminus.</text>
</comment>
<proteinExistence type="evidence at protein level"/>
<organism>
    <name type="scientific">Arabidopsis thaliana</name>
    <name type="common">Mouse-ear cress</name>
    <dbReference type="NCBI Taxonomy" id="3702"/>
    <lineage>
        <taxon>Eukaryota</taxon>
        <taxon>Viridiplantae</taxon>
        <taxon>Streptophyta</taxon>
        <taxon>Embryophyta</taxon>
        <taxon>Tracheophyta</taxon>
        <taxon>Spermatophyta</taxon>
        <taxon>Magnoliopsida</taxon>
        <taxon>eudicotyledons</taxon>
        <taxon>Gunneridae</taxon>
        <taxon>Pentapetalae</taxon>
        <taxon>rosids</taxon>
        <taxon>malvids</taxon>
        <taxon>Brassicales</taxon>
        <taxon>Brassicaceae</taxon>
        <taxon>Camelineae</taxon>
        <taxon>Arabidopsis</taxon>
    </lineage>
</organism>